<organism>
    <name type="scientific">Pongo abelii</name>
    <name type="common">Sumatran orangutan</name>
    <name type="synonym">Pongo pygmaeus abelii</name>
    <dbReference type="NCBI Taxonomy" id="9601"/>
    <lineage>
        <taxon>Eukaryota</taxon>
        <taxon>Metazoa</taxon>
        <taxon>Chordata</taxon>
        <taxon>Craniata</taxon>
        <taxon>Vertebrata</taxon>
        <taxon>Euteleostomi</taxon>
        <taxon>Mammalia</taxon>
        <taxon>Eutheria</taxon>
        <taxon>Euarchontoglires</taxon>
        <taxon>Primates</taxon>
        <taxon>Haplorrhini</taxon>
        <taxon>Catarrhini</taxon>
        <taxon>Hominidae</taxon>
        <taxon>Pongo</taxon>
    </lineage>
</organism>
<sequence>MSEDLAKQLASYKAQLQQVEAALSGNGENEDLLKLKKDLQEVIELTKDLLSTQPSETLASSDSFASTQPTHSWKVGDKCMAIWSEDGQCYEAEIEEIDEENGTAAITFAGYGNAEVTPLLNLKPVEEGRKAKEDSGNKPMSKKEMIAQQREYKKKKALKKAQRIKELEQEREDQKVKWQQFNNRAYSKNKKGQVKRSIFASPESVTGKVGVGTCGIADKPMTQYQDTSKYNVRHLMPQ</sequence>
<name>SPF30_PONAB</name>
<feature type="chain" id="PRO_0000347223" description="Survival of motor neuron-related-splicing factor 30">
    <location>
        <begin position="1"/>
        <end position="238"/>
    </location>
</feature>
<feature type="domain" description="Tudor" evidence="3">
    <location>
        <begin position="72"/>
        <end position="132"/>
    </location>
</feature>
<feature type="short sequence motif" description="Nuclear localization signal" evidence="2">
    <location>
        <begin position="142"/>
        <end position="160"/>
    </location>
</feature>
<feature type="modified residue" description="Phosphoserine" evidence="1">
    <location>
        <position position="201"/>
    </location>
</feature>
<feature type="modified residue" description="N6-acetyllysine" evidence="1">
    <location>
        <position position="219"/>
    </location>
</feature>
<keyword id="KW-0007">Acetylation</keyword>
<keyword id="KW-0053">Apoptosis</keyword>
<keyword id="KW-0507">mRNA processing</keyword>
<keyword id="KW-0508">mRNA splicing</keyword>
<keyword id="KW-0539">Nucleus</keyword>
<keyword id="KW-0597">Phosphoprotein</keyword>
<keyword id="KW-1185">Reference proteome</keyword>
<keyword id="KW-0747">Spliceosome</keyword>
<protein>
    <recommendedName>
        <fullName>Survival of motor neuron-related-splicing factor 30</fullName>
    </recommendedName>
    <alternativeName>
        <fullName>Survival motor neuron domain-containing protein 1</fullName>
    </alternativeName>
</protein>
<gene>
    <name type="primary">SMNDC1</name>
    <name type="synonym">SPF30</name>
</gene>
<evidence type="ECO:0000250" key="1">
    <source>
        <dbReference type="UniProtKB" id="O75940"/>
    </source>
</evidence>
<evidence type="ECO:0000255" key="2"/>
<evidence type="ECO:0000255" key="3">
    <source>
        <dbReference type="PROSITE-ProRule" id="PRU00211"/>
    </source>
</evidence>
<evidence type="ECO:0000305" key="4"/>
<accession>Q5R591</accession>
<proteinExistence type="evidence at transcript level"/>
<dbReference type="EMBL" id="CR860973">
    <property type="protein sequence ID" value="CAH93075.1"/>
    <property type="molecule type" value="mRNA"/>
</dbReference>
<dbReference type="RefSeq" id="NP_001126821.1">
    <property type="nucleotide sequence ID" value="NM_001133349.1"/>
</dbReference>
<dbReference type="BMRB" id="Q5R591"/>
<dbReference type="SMR" id="Q5R591"/>
<dbReference type="FunCoup" id="Q5R591">
    <property type="interactions" value="4418"/>
</dbReference>
<dbReference type="STRING" id="9601.ENSPPYP00000003078"/>
<dbReference type="Ensembl" id="ENSPPYT00000003182.2">
    <property type="protein sequence ID" value="ENSPPYP00000003078.1"/>
    <property type="gene ID" value="ENSPPYG00000002643.3"/>
</dbReference>
<dbReference type="GeneID" id="100173826"/>
<dbReference type="KEGG" id="pon:100173826"/>
<dbReference type="CTD" id="10285"/>
<dbReference type="eggNOG" id="KOG3026">
    <property type="taxonomic scope" value="Eukaryota"/>
</dbReference>
<dbReference type="GeneTree" id="ENSGT00940000153352"/>
<dbReference type="HOGENOM" id="CLU_069491_3_0_1"/>
<dbReference type="InParanoid" id="Q5R591"/>
<dbReference type="OMA" id="CMAVWSQ"/>
<dbReference type="OrthoDB" id="79171at2759"/>
<dbReference type="TreeFam" id="TF315413"/>
<dbReference type="Proteomes" id="UP000001595">
    <property type="component" value="Chromosome 10"/>
</dbReference>
<dbReference type="GO" id="GO:0015030">
    <property type="term" value="C:Cajal body"/>
    <property type="evidence" value="ECO:0007669"/>
    <property type="project" value="UniProtKB-SubCell"/>
</dbReference>
<dbReference type="GO" id="GO:0005737">
    <property type="term" value="C:cytoplasm"/>
    <property type="evidence" value="ECO:0007669"/>
    <property type="project" value="InterPro"/>
</dbReference>
<dbReference type="GO" id="GO:0016607">
    <property type="term" value="C:nuclear speck"/>
    <property type="evidence" value="ECO:0007669"/>
    <property type="project" value="UniProtKB-SubCell"/>
</dbReference>
<dbReference type="GO" id="GO:0071011">
    <property type="term" value="C:precatalytic spliceosome"/>
    <property type="evidence" value="ECO:0007669"/>
    <property type="project" value="TreeGrafter"/>
</dbReference>
<dbReference type="GO" id="GO:0003723">
    <property type="term" value="F:RNA binding"/>
    <property type="evidence" value="ECO:0007669"/>
    <property type="project" value="InterPro"/>
</dbReference>
<dbReference type="GO" id="GO:0006915">
    <property type="term" value="P:apoptotic process"/>
    <property type="evidence" value="ECO:0007669"/>
    <property type="project" value="UniProtKB-KW"/>
</dbReference>
<dbReference type="GO" id="GO:0006397">
    <property type="term" value="P:mRNA processing"/>
    <property type="evidence" value="ECO:0007669"/>
    <property type="project" value="UniProtKB-KW"/>
</dbReference>
<dbReference type="GO" id="GO:0000381">
    <property type="term" value="P:regulation of alternative mRNA splicing, via spliceosome"/>
    <property type="evidence" value="ECO:0007669"/>
    <property type="project" value="TreeGrafter"/>
</dbReference>
<dbReference type="GO" id="GO:0008380">
    <property type="term" value="P:RNA splicing"/>
    <property type="evidence" value="ECO:0007669"/>
    <property type="project" value="UniProtKB-KW"/>
</dbReference>
<dbReference type="CDD" id="cd20399">
    <property type="entry name" value="Tudor_SPF30"/>
    <property type="match status" value="1"/>
</dbReference>
<dbReference type="FunFam" id="2.30.30.140:FF:000038">
    <property type="entry name" value="Survival of motor neuron-related-splicing factor 30"/>
    <property type="match status" value="1"/>
</dbReference>
<dbReference type="Gene3D" id="2.30.30.140">
    <property type="match status" value="1"/>
</dbReference>
<dbReference type="InterPro" id="IPR010304">
    <property type="entry name" value="SMN_Tudor"/>
</dbReference>
<dbReference type="InterPro" id="IPR002999">
    <property type="entry name" value="Tudor"/>
</dbReference>
<dbReference type="PANTHER" id="PTHR13681:SF26">
    <property type="entry name" value="SURVIVAL OF MOTOR NEURON-RELATED-SPLICING FACTOR 30"/>
    <property type="match status" value="1"/>
</dbReference>
<dbReference type="PANTHER" id="PTHR13681">
    <property type="entry name" value="SURVIVAL OF MOTOR NEURON-RELATED-SPLICING FACTOR 30-RELATED"/>
    <property type="match status" value="1"/>
</dbReference>
<dbReference type="Pfam" id="PF06003">
    <property type="entry name" value="SMN_Tudor"/>
    <property type="match status" value="1"/>
</dbReference>
<dbReference type="SMART" id="SM00333">
    <property type="entry name" value="TUDOR"/>
    <property type="match status" value="1"/>
</dbReference>
<dbReference type="SUPFAM" id="SSF63748">
    <property type="entry name" value="Tudor/PWWP/MBT"/>
    <property type="match status" value="1"/>
</dbReference>
<dbReference type="PROSITE" id="PS50304">
    <property type="entry name" value="TUDOR"/>
    <property type="match status" value="1"/>
</dbReference>
<reference key="1">
    <citation type="submission" date="2004-11" db="EMBL/GenBank/DDBJ databases">
        <authorList>
            <consortium name="The German cDNA consortium"/>
        </authorList>
    </citation>
    <scope>NUCLEOTIDE SEQUENCE [LARGE SCALE MRNA]</scope>
    <source>
        <tissue>Brain cortex</tissue>
    </source>
</reference>
<comment type="function">
    <text evidence="1">Involved in spliceosome assembly (By similarity).</text>
</comment>
<comment type="subunit">
    <text evidence="1">Associates with spliceosomes. Associates with U4/U5/U6 tri-snRNP and with U2 snRNP (By similarity).</text>
</comment>
<comment type="subcellular location">
    <subcellularLocation>
        <location evidence="1">Nucleus speckle</location>
    </subcellularLocation>
    <subcellularLocation>
        <location evidence="1">Nucleus</location>
        <location evidence="1">Cajal body</location>
    </subcellularLocation>
    <text evidence="1">Detected in nuclear speckles containing snRNP and in Cajal (coiled) bodies.</text>
</comment>
<comment type="domain">
    <text evidence="1">The Tudor domain mediates association with dimethylarginines, which are common in snRNP proteins.</text>
</comment>
<comment type="similarity">
    <text evidence="4">Belongs to the SMN family.</text>
</comment>